<dbReference type="EC" id="2.7.1.71" evidence="1"/>
<dbReference type="EMBL" id="CP000668">
    <property type="protein sequence ID" value="ABP41206.1"/>
    <property type="molecule type" value="Genomic_DNA"/>
</dbReference>
<dbReference type="RefSeq" id="WP_002208693.1">
    <property type="nucleotide sequence ID" value="NZ_CP009715.1"/>
</dbReference>
<dbReference type="SMR" id="A4TPJ4"/>
<dbReference type="GeneID" id="57975502"/>
<dbReference type="KEGG" id="ypp:YPDSF_2844"/>
<dbReference type="PATRIC" id="fig|386656.14.peg.105"/>
<dbReference type="UniPathway" id="UPA00053">
    <property type="reaction ID" value="UER00088"/>
</dbReference>
<dbReference type="GO" id="GO:0005829">
    <property type="term" value="C:cytosol"/>
    <property type="evidence" value="ECO:0007669"/>
    <property type="project" value="TreeGrafter"/>
</dbReference>
<dbReference type="GO" id="GO:0005524">
    <property type="term" value="F:ATP binding"/>
    <property type="evidence" value="ECO:0007669"/>
    <property type="project" value="UniProtKB-UniRule"/>
</dbReference>
<dbReference type="GO" id="GO:0000287">
    <property type="term" value="F:magnesium ion binding"/>
    <property type="evidence" value="ECO:0007669"/>
    <property type="project" value="UniProtKB-UniRule"/>
</dbReference>
<dbReference type="GO" id="GO:0004765">
    <property type="term" value="F:shikimate kinase activity"/>
    <property type="evidence" value="ECO:0007669"/>
    <property type="project" value="UniProtKB-UniRule"/>
</dbReference>
<dbReference type="GO" id="GO:0008652">
    <property type="term" value="P:amino acid biosynthetic process"/>
    <property type="evidence" value="ECO:0007669"/>
    <property type="project" value="UniProtKB-KW"/>
</dbReference>
<dbReference type="GO" id="GO:0009073">
    <property type="term" value="P:aromatic amino acid family biosynthetic process"/>
    <property type="evidence" value="ECO:0007669"/>
    <property type="project" value="UniProtKB-KW"/>
</dbReference>
<dbReference type="GO" id="GO:0009423">
    <property type="term" value="P:chorismate biosynthetic process"/>
    <property type="evidence" value="ECO:0007669"/>
    <property type="project" value="UniProtKB-UniRule"/>
</dbReference>
<dbReference type="CDD" id="cd00464">
    <property type="entry name" value="SK"/>
    <property type="match status" value="1"/>
</dbReference>
<dbReference type="Gene3D" id="3.40.50.300">
    <property type="entry name" value="P-loop containing nucleotide triphosphate hydrolases"/>
    <property type="match status" value="1"/>
</dbReference>
<dbReference type="HAMAP" id="MF_00109">
    <property type="entry name" value="Shikimate_kinase"/>
    <property type="match status" value="1"/>
</dbReference>
<dbReference type="HAMAP" id="MF_01269">
    <property type="entry name" value="Shikimate_kinase_2"/>
    <property type="match status" value="1"/>
</dbReference>
<dbReference type="InterPro" id="IPR027417">
    <property type="entry name" value="P-loop_NTPase"/>
</dbReference>
<dbReference type="InterPro" id="IPR031322">
    <property type="entry name" value="Shikimate/glucono_kinase"/>
</dbReference>
<dbReference type="InterPro" id="IPR000623">
    <property type="entry name" value="Shikimate_kinase/TSH1"/>
</dbReference>
<dbReference type="InterPro" id="IPR027544">
    <property type="entry name" value="Shikimate_kinase_2"/>
</dbReference>
<dbReference type="InterPro" id="IPR023000">
    <property type="entry name" value="Shikimate_kinase_CS"/>
</dbReference>
<dbReference type="NCBIfam" id="NF002988">
    <property type="entry name" value="PRK03731.1"/>
    <property type="match status" value="1"/>
</dbReference>
<dbReference type="PANTHER" id="PTHR21087">
    <property type="entry name" value="SHIKIMATE KINASE"/>
    <property type="match status" value="1"/>
</dbReference>
<dbReference type="PANTHER" id="PTHR21087:SF21">
    <property type="entry name" value="SHIKIMATE KINASE 2"/>
    <property type="match status" value="1"/>
</dbReference>
<dbReference type="Pfam" id="PF01202">
    <property type="entry name" value="SKI"/>
    <property type="match status" value="1"/>
</dbReference>
<dbReference type="PRINTS" id="PR01100">
    <property type="entry name" value="SHIKIMTKNASE"/>
</dbReference>
<dbReference type="SUPFAM" id="SSF52540">
    <property type="entry name" value="P-loop containing nucleoside triphosphate hydrolases"/>
    <property type="match status" value="1"/>
</dbReference>
<dbReference type="PROSITE" id="PS01128">
    <property type="entry name" value="SHIKIMATE_KINASE"/>
    <property type="match status" value="1"/>
</dbReference>
<evidence type="ECO:0000255" key="1">
    <source>
        <dbReference type="HAMAP-Rule" id="MF_01269"/>
    </source>
</evidence>
<comment type="function">
    <text evidence="1">Catalyzes the specific phosphorylation of the 3-hydroxyl group of shikimic acid using ATP as a cosubstrate.</text>
</comment>
<comment type="catalytic activity">
    <reaction evidence="1">
        <text>shikimate + ATP = 3-phosphoshikimate + ADP + H(+)</text>
        <dbReference type="Rhea" id="RHEA:13121"/>
        <dbReference type="ChEBI" id="CHEBI:15378"/>
        <dbReference type="ChEBI" id="CHEBI:30616"/>
        <dbReference type="ChEBI" id="CHEBI:36208"/>
        <dbReference type="ChEBI" id="CHEBI:145989"/>
        <dbReference type="ChEBI" id="CHEBI:456216"/>
        <dbReference type="EC" id="2.7.1.71"/>
    </reaction>
</comment>
<comment type="cofactor">
    <cofactor evidence="1">
        <name>Mg(2+)</name>
        <dbReference type="ChEBI" id="CHEBI:18420"/>
    </cofactor>
    <text evidence="1">Binds 1 Mg(2+) ion per subunit.</text>
</comment>
<comment type="pathway">
    <text evidence="1">Metabolic intermediate biosynthesis; chorismate biosynthesis; chorismate from D-erythrose 4-phosphate and phosphoenolpyruvate: step 5/7.</text>
</comment>
<comment type="subunit">
    <text evidence="1">Monomer.</text>
</comment>
<comment type="subcellular location">
    <subcellularLocation>
        <location evidence="1">Cytoplasm</location>
    </subcellularLocation>
</comment>
<comment type="domain">
    <text evidence="1">The LID domain closes over the active site upon ATP binding.</text>
</comment>
<comment type="similarity">
    <text evidence="1">Belongs to the shikimate kinase family. AroL subfamily.</text>
</comment>
<keyword id="KW-0028">Amino-acid biosynthesis</keyword>
<keyword id="KW-0057">Aromatic amino acid biosynthesis</keyword>
<keyword id="KW-0067">ATP-binding</keyword>
<keyword id="KW-0963">Cytoplasm</keyword>
<keyword id="KW-0418">Kinase</keyword>
<keyword id="KW-0460">Magnesium</keyword>
<keyword id="KW-0479">Metal-binding</keyword>
<keyword id="KW-0547">Nucleotide-binding</keyword>
<keyword id="KW-0808">Transferase</keyword>
<accession>A4TPJ4</accession>
<gene>
    <name evidence="1" type="primary">aroL</name>
    <name type="ordered locus">YPDSF_2844</name>
</gene>
<sequence>MTQTIFMVGARGAGKTTIGKALAQALGYRFVDTDLFMQQTSQMTVAEVVESEGWDGFRLRESMALQAVTAPKTVVATGGGAVLSSENRAFMRDHGRVIYLRASAAVLAKRLAEDPEEAQRPSLTGKPIVEEILDVLASREALYQDVAHHVLDGTQTPSLVVEQILQMLTGEMVK</sequence>
<name>AROL_YERPP</name>
<organism>
    <name type="scientific">Yersinia pestis (strain Pestoides F)</name>
    <dbReference type="NCBI Taxonomy" id="386656"/>
    <lineage>
        <taxon>Bacteria</taxon>
        <taxon>Pseudomonadati</taxon>
        <taxon>Pseudomonadota</taxon>
        <taxon>Gammaproteobacteria</taxon>
        <taxon>Enterobacterales</taxon>
        <taxon>Yersiniaceae</taxon>
        <taxon>Yersinia</taxon>
    </lineage>
</organism>
<protein>
    <recommendedName>
        <fullName evidence="1">Shikimate kinase 2</fullName>
        <shortName evidence="1">SK 2</shortName>
        <ecNumber evidence="1">2.7.1.71</ecNumber>
    </recommendedName>
</protein>
<reference key="1">
    <citation type="submission" date="2007-02" db="EMBL/GenBank/DDBJ databases">
        <title>Complete sequence of chromosome of Yersinia pestis Pestoides F.</title>
        <authorList>
            <consortium name="US DOE Joint Genome Institute"/>
            <person name="Copeland A."/>
            <person name="Lucas S."/>
            <person name="Lapidus A."/>
            <person name="Barry K."/>
            <person name="Detter J.C."/>
            <person name="Glavina del Rio T."/>
            <person name="Hammon N."/>
            <person name="Israni S."/>
            <person name="Dalin E."/>
            <person name="Tice H."/>
            <person name="Pitluck S."/>
            <person name="Di Bartolo G."/>
            <person name="Chain P."/>
            <person name="Malfatti S."/>
            <person name="Shin M."/>
            <person name="Vergez L."/>
            <person name="Schmutz J."/>
            <person name="Larimer F."/>
            <person name="Land M."/>
            <person name="Hauser L."/>
            <person name="Worsham P."/>
            <person name="Chu M."/>
            <person name="Bearden S."/>
            <person name="Garcia E."/>
            <person name="Richardson P."/>
        </authorList>
    </citation>
    <scope>NUCLEOTIDE SEQUENCE [LARGE SCALE GENOMIC DNA]</scope>
    <source>
        <strain>Pestoides F</strain>
    </source>
</reference>
<feature type="chain" id="PRO_1000067340" description="Shikimate kinase 2">
    <location>
        <begin position="1"/>
        <end position="174"/>
    </location>
</feature>
<feature type="region of interest" description="LID domain">
    <location>
        <begin position="112"/>
        <end position="126"/>
    </location>
</feature>
<feature type="binding site" evidence="1">
    <location>
        <begin position="12"/>
        <end position="17"/>
    </location>
    <ligand>
        <name>ATP</name>
        <dbReference type="ChEBI" id="CHEBI:30616"/>
    </ligand>
</feature>
<feature type="binding site" evidence="1">
    <location>
        <position position="16"/>
    </location>
    <ligand>
        <name>Mg(2+)</name>
        <dbReference type="ChEBI" id="CHEBI:18420"/>
    </ligand>
</feature>
<feature type="binding site" evidence="1">
    <location>
        <position position="32"/>
    </location>
    <ligand>
        <name>Mg(2+)</name>
        <dbReference type="ChEBI" id="CHEBI:18420"/>
    </ligand>
</feature>
<feature type="binding site" evidence="1">
    <location>
        <position position="34"/>
    </location>
    <ligand>
        <name>substrate</name>
    </ligand>
</feature>
<feature type="binding site" evidence="1">
    <location>
        <position position="58"/>
    </location>
    <ligand>
        <name>substrate</name>
    </ligand>
</feature>
<feature type="binding site" evidence="1">
    <location>
        <position position="79"/>
    </location>
    <ligand>
        <name>substrate</name>
    </ligand>
</feature>
<feature type="binding site" evidence="1">
    <location>
        <position position="120"/>
    </location>
    <ligand>
        <name>ATP</name>
        <dbReference type="ChEBI" id="CHEBI:30616"/>
    </ligand>
</feature>
<feature type="binding site" evidence="1">
    <location>
        <position position="139"/>
    </location>
    <ligand>
        <name>substrate</name>
    </ligand>
</feature>
<feature type="binding site" evidence="1">
    <location>
        <position position="155"/>
    </location>
    <ligand>
        <name>ATP</name>
        <dbReference type="ChEBI" id="CHEBI:30616"/>
    </ligand>
</feature>
<proteinExistence type="inferred from homology"/>